<dbReference type="EMBL" id="AY147579">
    <property type="protein sequence ID" value="AAN32417.1"/>
    <property type="molecule type" value="Genomic_DNA"/>
</dbReference>
<dbReference type="SMR" id="Q67HD7"/>
<dbReference type="GO" id="GO:0009535">
    <property type="term" value="C:chloroplast thylakoid membrane"/>
    <property type="evidence" value="ECO:0007669"/>
    <property type="project" value="UniProtKB-SubCell"/>
</dbReference>
<dbReference type="GO" id="GO:0009539">
    <property type="term" value="C:photosystem II reaction center"/>
    <property type="evidence" value="ECO:0007669"/>
    <property type="project" value="InterPro"/>
</dbReference>
<dbReference type="GO" id="GO:0009055">
    <property type="term" value="F:electron transfer activity"/>
    <property type="evidence" value="ECO:0007669"/>
    <property type="project" value="UniProtKB-UniRule"/>
</dbReference>
<dbReference type="GO" id="GO:0020037">
    <property type="term" value="F:heme binding"/>
    <property type="evidence" value="ECO:0007669"/>
    <property type="project" value="InterPro"/>
</dbReference>
<dbReference type="GO" id="GO:0005506">
    <property type="term" value="F:iron ion binding"/>
    <property type="evidence" value="ECO:0007669"/>
    <property type="project" value="UniProtKB-UniRule"/>
</dbReference>
<dbReference type="GO" id="GO:0009767">
    <property type="term" value="P:photosynthetic electron transport chain"/>
    <property type="evidence" value="ECO:0007669"/>
    <property type="project" value="InterPro"/>
</dbReference>
<dbReference type="HAMAP" id="MF_00643">
    <property type="entry name" value="PSII_PsbF"/>
    <property type="match status" value="1"/>
</dbReference>
<dbReference type="InterPro" id="IPR006241">
    <property type="entry name" value="PSII_cyt_b559_bsu"/>
</dbReference>
<dbReference type="InterPro" id="IPR006216">
    <property type="entry name" value="PSII_cyt_b559_CS"/>
</dbReference>
<dbReference type="InterPro" id="IPR013081">
    <property type="entry name" value="PSII_cyt_b559_N"/>
</dbReference>
<dbReference type="NCBIfam" id="TIGR01333">
    <property type="entry name" value="cyt_b559_beta"/>
    <property type="match status" value="1"/>
</dbReference>
<dbReference type="Pfam" id="PF00283">
    <property type="entry name" value="Cytochrom_B559"/>
    <property type="match status" value="1"/>
</dbReference>
<dbReference type="PIRSF" id="PIRSF000037">
    <property type="entry name" value="PsbF"/>
    <property type="match status" value="1"/>
</dbReference>
<dbReference type="SUPFAM" id="SSF161045">
    <property type="entry name" value="Cytochrome b559 subunits"/>
    <property type="match status" value="1"/>
</dbReference>
<dbReference type="PROSITE" id="PS00537">
    <property type="entry name" value="CYTOCHROME_B559"/>
    <property type="match status" value="1"/>
</dbReference>
<accession>Q67HD7</accession>
<keyword id="KW-0150">Chloroplast</keyword>
<keyword id="KW-0249">Electron transport</keyword>
<keyword id="KW-0349">Heme</keyword>
<keyword id="KW-0408">Iron</keyword>
<keyword id="KW-0472">Membrane</keyword>
<keyword id="KW-0479">Metal-binding</keyword>
<keyword id="KW-0602">Photosynthesis</keyword>
<keyword id="KW-0604">Photosystem II</keyword>
<keyword id="KW-0934">Plastid</keyword>
<keyword id="KW-0793">Thylakoid</keyword>
<keyword id="KW-0812">Transmembrane</keyword>
<keyword id="KW-1133">Transmembrane helix</keyword>
<keyword id="KW-0813">Transport</keyword>
<geneLocation type="chloroplast"/>
<protein>
    <recommendedName>
        <fullName evidence="1">Cytochrome b559 subunit beta</fullName>
    </recommendedName>
    <alternativeName>
        <fullName evidence="1">PSII reaction center subunit VI</fullName>
    </alternativeName>
</protein>
<proteinExistence type="inferred from homology"/>
<name>PSBF_PHOTN</name>
<organism>
    <name type="scientific">Phormium tenax</name>
    <name type="common">New Zealand flax</name>
    <dbReference type="NCBI Taxonomy" id="51475"/>
    <lineage>
        <taxon>Eukaryota</taxon>
        <taxon>Viridiplantae</taxon>
        <taxon>Streptophyta</taxon>
        <taxon>Embryophyta</taxon>
        <taxon>Tracheophyta</taxon>
        <taxon>Spermatophyta</taxon>
        <taxon>Magnoliopsida</taxon>
        <taxon>Liliopsida</taxon>
        <taxon>Asparagales</taxon>
        <taxon>Asphodelaceae</taxon>
        <taxon>Hemerocallidoideae</taxon>
        <taxon>Phormium</taxon>
    </lineage>
</organism>
<gene>
    <name evidence="1" type="primary">psbF</name>
</gene>
<feature type="chain" id="PRO_0000200437" description="Cytochrome b559 subunit beta">
    <location>
        <begin position="1"/>
        <end position="39"/>
    </location>
</feature>
<feature type="transmembrane region" description="Helical" evidence="1">
    <location>
        <begin position="14"/>
        <end position="30"/>
    </location>
</feature>
<feature type="binding site" description="axial binding residue" evidence="1">
    <location>
        <position position="18"/>
    </location>
    <ligand>
        <name>heme</name>
        <dbReference type="ChEBI" id="CHEBI:30413"/>
        <note>ligand shared with alpha subunit</note>
    </ligand>
    <ligandPart>
        <name>Fe</name>
        <dbReference type="ChEBI" id="CHEBI:18248"/>
    </ligandPart>
</feature>
<evidence type="ECO:0000255" key="1">
    <source>
        <dbReference type="HAMAP-Rule" id="MF_00643"/>
    </source>
</evidence>
<reference key="1">
    <citation type="submission" date="2002-09" db="EMBL/GenBank/DDBJ databases">
        <title>Phylogenetic relationships among the major lineages of Asparagales based on a large chloroplast data set.</title>
        <authorList>
            <person name="McPherson M.A."/>
            <person name="Rai H.S."/>
            <person name="Wong W.A."/>
            <person name="Graham S.W."/>
        </authorList>
    </citation>
    <scope>NUCLEOTIDE SEQUENCE [GENOMIC DNA]</scope>
</reference>
<sequence length="39" mass="4424">MTIDRTYPIFTVRWLAVHGLAVPTVSFLGSISAMQFIQR</sequence>
<comment type="function">
    <text evidence="1">This b-type cytochrome is tightly associated with the reaction center of photosystem II (PSII). PSII is a light-driven water:plastoquinone oxidoreductase that uses light energy to abstract electrons from H(2)O, generating O(2) and a proton gradient subsequently used for ATP formation. It consists of a core antenna complex that captures photons, and an electron transfer chain that converts photonic excitation into a charge separation.</text>
</comment>
<comment type="cofactor">
    <cofactor evidence="1">
        <name>heme b</name>
        <dbReference type="ChEBI" id="CHEBI:60344"/>
    </cofactor>
    <text evidence="1">With its partner (PsbE) binds heme. PSII binds additional chlorophylls, carotenoids and specific lipids.</text>
</comment>
<comment type="subunit">
    <text evidence="1">Heterodimer of an alpha subunit and a beta subunit. PSII is composed of 1 copy each of membrane proteins PsbA, PsbB, PsbC, PsbD, PsbE, PsbF, PsbH, PsbI, PsbJ, PsbK, PsbL, PsbM, PsbT, PsbX, PsbY, PsbZ, Psb30/Ycf12, at least 3 peripheral proteins of the oxygen-evolving complex and a large number of cofactors. It forms dimeric complexes.</text>
</comment>
<comment type="subcellular location">
    <subcellularLocation>
        <location evidence="1">Plastid</location>
        <location evidence="1">Chloroplast thylakoid membrane</location>
        <topology evidence="1">Single-pass membrane protein</topology>
    </subcellularLocation>
</comment>
<comment type="similarity">
    <text evidence="1">Belongs to the PsbE/PsbF family.</text>
</comment>